<feature type="chain" id="PRO_1000166443" description="Small ribosomal subunit protein uS15">
    <location>
        <begin position="1"/>
        <end position="89"/>
    </location>
</feature>
<dbReference type="EMBL" id="CP000920">
    <property type="protein sequence ID" value="ACO20981.1"/>
    <property type="molecule type" value="Genomic_DNA"/>
</dbReference>
<dbReference type="RefSeq" id="WP_001018251.1">
    <property type="nucleotide sequence ID" value="NC_012467.1"/>
</dbReference>
<dbReference type="SMR" id="C1CLW8"/>
<dbReference type="GeneID" id="93847676"/>
<dbReference type="KEGG" id="spp:SPP_1647"/>
<dbReference type="HOGENOM" id="CLU_148518_0_0_9"/>
<dbReference type="GO" id="GO:0022627">
    <property type="term" value="C:cytosolic small ribosomal subunit"/>
    <property type="evidence" value="ECO:0007669"/>
    <property type="project" value="TreeGrafter"/>
</dbReference>
<dbReference type="GO" id="GO:0019843">
    <property type="term" value="F:rRNA binding"/>
    <property type="evidence" value="ECO:0007669"/>
    <property type="project" value="UniProtKB-UniRule"/>
</dbReference>
<dbReference type="GO" id="GO:0003735">
    <property type="term" value="F:structural constituent of ribosome"/>
    <property type="evidence" value="ECO:0007669"/>
    <property type="project" value="InterPro"/>
</dbReference>
<dbReference type="GO" id="GO:0006412">
    <property type="term" value="P:translation"/>
    <property type="evidence" value="ECO:0007669"/>
    <property type="project" value="UniProtKB-UniRule"/>
</dbReference>
<dbReference type="CDD" id="cd00353">
    <property type="entry name" value="Ribosomal_S15p_S13e"/>
    <property type="match status" value="1"/>
</dbReference>
<dbReference type="FunFam" id="1.10.287.10:FF:000002">
    <property type="entry name" value="30S ribosomal protein S15"/>
    <property type="match status" value="1"/>
</dbReference>
<dbReference type="Gene3D" id="6.10.250.3130">
    <property type="match status" value="1"/>
</dbReference>
<dbReference type="Gene3D" id="1.10.287.10">
    <property type="entry name" value="S15/NS1, RNA-binding"/>
    <property type="match status" value="1"/>
</dbReference>
<dbReference type="HAMAP" id="MF_01343_B">
    <property type="entry name" value="Ribosomal_uS15_B"/>
    <property type="match status" value="1"/>
</dbReference>
<dbReference type="InterPro" id="IPR000589">
    <property type="entry name" value="Ribosomal_uS15"/>
</dbReference>
<dbReference type="InterPro" id="IPR005290">
    <property type="entry name" value="Ribosomal_uS15_bac-type"/>
</dbReference>
<dbReference type="InterPro" id="IPR009068">
    <property type="entry name" value="uS15_NS1_RNA-bd_sf"/>
</dbReference>
<dbReference type="NCBIfam" id="TIGR00952">
    <property type="entry name" value="S15_bact"/>
    <property type="match status" value="1"/>
</dbReference>
<dbReference type="PANTHER" id="PTHR23321">
    <property type="entry name" value="RIBOSOMAL PROTEIN S15, BACTERIAL AND ORGANELLAR"/>
    <property type="match status" value="1"/>
</dbReference>
<dbReference type="PANTHER" id="PTHR23321:SF26">
    <property type="entry name" value="SMALL RIBOSOMAL SUBUNIT PROTEIN US15M"/>
    <property type="match status" value="1"/>
</dbReference>
<dbReference type="Pfam" id="PF00312">
    <property type="entry name" value="Ribosomal_S15"/>
    <property type="match status" value="1"/>
</dbReference>
<dbReference type="SMART" id="SM01387">
    <property type="entry name" value="Ribosomal_S15"/>
    <property type="match status" value="1"/>
</dbReference>
<dbReference type="SUPFAM" id="SSF47060">
    <property type="entry name" value="S15/NS1 RNA-binding domain"/>
    <property type="match status" value="1"/>
</dbReference>
<dbReference type="PROSITE" id="PS00362">
    <property type="entry name" value="RIBOSOMAL_S15"/>
    <property type="match status" value="1"/>
</dbReference>
<organism>
    <name type="scientific">Streptococcus pneumoniae (strain P1031)</name>
    <dbReference type="NCBI Taxonomy" id="488223"/>
    <lineage>
        <taxon>Bacteria</taxon>
        <taxon>Bacillati</taxon>
        <taxon>Bacillota</taxon>
        <taxon>Bacilli</taxon>
        <taxon>Lactobacillales</taxon>
        <taxon>Streptococcaceae</taxon>
        <taxon>Streptococcus</taxon>
    </lineage>
</organism>
<sequence length="89" mass="10535">MAISKEKKNEIIAQYARHEGDTGSVEVQVAVLTWEINHLNEHIKQHKKDHATYRGLMKKIGRRRNLLAYLRKNDVNRYRELINSLGLRR</sequence>
<gene>
    <name evidence="1" type="primary">rpsO</name>
    <name type="ordered locus">SPP_1647</name>
</gene>
<name>RS15_STRZP</name>
<protein>
    <recommendedName>
        <fullName evidence="1">Small ribosomal subunit protein uS15</fullName>
    </recommendedName>
    <alternativeName>
        <fullName evidence="2">30S ribosomal protein S15</fullName>
    </alternativeName>
</protein>
<proteinExistence type="inferred from homology"/>
<comment type="function">
    <text evidence="1">One of the primary rRNA binding proteins, it binds directly to 16S rRNA where it helps nucleate assembly of the platform of the 30S subunit by binding and bridging several RNA helices of the 16S rRNA.</text>
</comment>
<comment type="function">
    <text evidence="1">Forms an intersubunit bridge (bridge B4) with the 23S rRNA of the 50S subunit in the ribosome.</text>
</comment>
<comment type="subunit">
    <text evidence="1">Part of the 30S ribosomal subunit. Forms a bridge to the 50S subunit in the 70S ribosome, contacting the 23S rRNA.</text>
</comment>
<comment type="similarity">
    <text evidence="1">Belongs to the universal ribosomal protein uS15 family.</text>
</comment>
<evidence type="ECO:0000255" key="1">
    <source>
        <dbReference type="HAMAP-Rule" id="MF_01343"/>
    </source>
</evidence>
<evidence type="ECO:0000305" key="2"/>
<accession>C1CLW8</accession>
<reference key="1">
    <citation type="journal article" date="2010" name="Genome Biol.">
        <title>Structure and dynamics of the pan-genome of Streptococcus pneumoniae and closely related species.</title>
        <authorList>
            <person name="Donati C."/>
            <person name="Hiller N.L."/>
            <person name="Tettelin H."/>
            <person name="Muzzi A."/>
            <person name="Croucher N.J."/>
            <person name="Angiuoli S.V."/>
            <person name="Oggioni M."/>
            <person name="Dunning Hotopp J.C."/>
            <person name="Hu F.Z."/>
            <person name="Riley D.R."/>
            <person name="Covacci A."/>
            <person name="Mitchell T.J."/>
            <person name="Bentley S.D."/>
            <person name="Kilian M."/>
            <person name="Ehrlich G.D."/>
            <person name="Rappuoli R."/>
            <person name="Moxon E.R."/>
            <person name="Masignani V."/>
        </authorList>
    </citation>
    <scope>NUCLEOTIDE SEQUENCE [LARGE SCALE GENOMIC DNA]</scope>
    <source>
        <strain>P1031</strain>
    </source>
</reference>
<keyword id="KW-0687">Ribonucleoprotein</keyword>
<keyword id="KW-0689">Ribosomal protein</keyword>
<keyword id="KW-0694">RNA-binding</keyword>
<keyword id="KW-0699">rRNA-binding</keyword>